<comment type="function">
    <text evidence="1">Involved in nuclear mRNA splicing.</text>
</comment>
<comment type="subunit">
    <text evidence="6">Component of the spliceosome where it is associated with snRNP U1.</text>
</comment>
<comment type="subcellular location">
    <subcellularLocation>
        <location evidence="5">Nucleus</location>
        <location evidence="5">Nucleolus</location>
    </subcellularLocation>
</comment>
<comment type="similarity">
    <text evidence="2">Belongs to the RRM U1 A/B'' family.</text>
</comment>
<protein>
    <recommendedName>
        <fullName>U1 small nuclear ribonucleoprotein usp102</fullName>
        <shortName>U1 snRNP protein usp102</shortName>
    </recommendedName>
</protein>
<accession>O74968</accession>
<gene>
    <name evidence="8" type="primary">usp102</name>
    <name evidence="8" type="synonym">mud1</name>
    <name type="ORF">SPBC4B4.07c</name>
</gene>
<name>RU1A_SCHPO</name>
<reference evidence="8" key="1">
    <citation type="journal article" date="2002" name="Nature">
        <title>The genome sequence of Schizosaccharomyces pombe.</title>
        <authorList>
            <person name="Wood V."/>
            <person name="Gwilliam R."/>
            <person name="Rajandream M.A."/>
            <person name="Lyne M.H."/>
            <person name="Lyne R."/>
            <person name="Stewart A."/>
            <person name="Sgouros J.G."/>
            <person name="Peat N."/>
            <person name="Hayles J."/>
            <person name="Baker S.G."/>
            <person name="Basham D."/>
            <person name="Bowman S."/>
            <person name="Brooks K."/>
            <person name="Brown D."/>
            <person name="Brown S."/>
            <person name="Chillingworth T."/>
            <person name="Churcher C.M."/>
            <person name="Collins M."/>
            <person name="Connor R."/>
            <person name="Cronin A."/>
            <person name="Davis P."/>
            <person name="Feltwell T."/>
            <person name="Fraser A."/>
            <person name="Gentles S."/>
            <person name="Goble A."/>
            <person name="Hamlin N."/>
            <person name="Harris D.E."/>
            <person name="Hidalgo J."/>
            <person name="Hodgson G."/>
            <person name="Holroyd S."/>
            <person name="Hornsby T."/>
            <person name="Howarth S."/>
            <person name="Huckle E.J."/>
            <person name="Hunt S."/>
            <person name="Jagels K."/>
            <person name="James K.D."/>
            <person name="Jones L."/>
            <person name="Jones M."/>
            <person name="Leather S."/>
            <person name="McDonald S."/>
            <person name="McLean J."/>
            <person name="Mooney P."/>
            <person name="Moule S."/>
            <person name="Mungall K.L."/>
            <person name="Murphy L.D."/>
            <person name="Niblett D."/>
            <person name="Odell C."/>
            <person name="Oliver K."/>
            <person name="O'Neil S."/>
            <person name="Pearson D."/>
            <person name="Quail M.A."/>
            <person name="Rabbinowitsch E."/>
            <person name="Rutherford K.M."/>
            <person name="Rutter S."/>
            <person name="Saunders D."/>
            <person name="Seeger K."/>
            <person name="Sharp S."/>
            <person name="Skelton J."/>
            <person name="Simmonds M.N."/>
            <person name="Squares R."/>
            <person name="Squares S."/>
            <person name="Stevens K."/>
            <person name="Taylor K."/>
            <person name="Taylor R.G."/>
            <person name="Tivey A."/>
            <person name="Walsh S.V."/>
            <person name="Warren T."/>
            <person name="Whitehead S."/>
            <person name="Woodward J.R."/>
            <person name="Volckaert G."/>
            <person name="Aert R."/>
            <person name="Robben J."/>
            <person name="Grymonprez B."/>
            <person name="Weltjens I."/>
            <person name="Vanstreels E."/>
            <person name="Rieger M."/>
            <person name="Schaefer M."/>
            <person name="Mueller-Auer S."/>
            <person name="Gabel C."/>
            <person name="Fuchs M."/>
            <person name="Duesterhoeft A."/>
            <person name="Fritzc C."/>
            <person name="Holzer E."/>
            <person name="Moestl D."/>
            <person name="Hilbert H."/>
            <person name="Borzym K."/>
            <person name="Langer I."/>
            <person name="Beck A."/>
            <person name="Lehrach H."/>
            <person name="Reinhardt R."/>
            <person name="Pohl T.M."/>
            <person name="Eger P."/>
            <person name="Zimmermann W."/>
            <person name="Wedler H."/>
            <person name="Wambutt R."/>
            <person name="Purnelle B."/>
            <person name="Goffeau A."/>
            <person name="Cadieu E."/>
            <person name="Dreano S."/>
            <person name="Gloux S."/>
            <person name="Lelaure V."/>
            <person name="Mottier S."/>
            <person name="Galibert F."/>
            <person name="Aves S.J."/>
            <person name="Xiang Z."/>
            <person name="Hunt C."/>
            <person name="Moore K."/>
            <person name="Hurst S.M."/>
            <person name="Lucas M."/>
            <person name="Rochet M."/>
            <person name="Gaillardin C."/>
            <person name="Tallada V.A."/>
            <person name="Garzon A."/>
            <person name="Thode G."/>
            <person name="Daga R.R."/>
            <person name="Cruzado L."/>
            <person name="Jimenez J."/>
            <person name="Sanchez M."/>
            <person name="del Rey F."/>
            <person name="Benito J."/>
            <person name="Dominguez A."/>
            <person name="Revuelta J.L."/>
            <person name="Moreno S."/>
            <person name="Armstrong J."/>
            <person name="Forsburg S.L."/>
            <person name="Cerutti L."/>
            <person name="Lowe T."/>
            <person name="McCombie W.R."/>
            <person name="Paulsen I."/>
            <person name="Potashkin J."/>
            <person name="Shpakovski G.V."/>
            <person name="Ussery D."/>
            <person name="Barrell B.G."/>
            <person name="Nurse P."/>
        </authorList>
    </citation>
    <scope>NUCLEOTIDE SEQUENCE [LARGE SCALE GENOMIC DNA]</scope>
    <source>
        <strain>972 / ATCC 24843</strain>
    </source>
</reference>
<reference evidence="7" key="2">
    <citation type="journal article" date="2006" name="Nat. Biotechnol.">
        <title>ORFeome cloning and global analysis of protein localization in the fission yeast Schizosaccharomyces pombe.</title>
        <authorList>
            <person name="Matsuyama A."/>
            <person name="Arai R."/>
            <person name="Yashiroda Y."/>
            <person name="Shirai A."/>
            <person name="Kamata A."/>
            <person name="Sekido S."/>
            <person name="Kobayashi Y."/>
            <person name="Hashimoto A."/>
            <person name="Hamamoto M."/>
            <person name="Hiraoka Y."/>
            <person name="Horinouchi S."/>
            <person name="Yoshida M."/>
        </authorList>
    </citation>
    <scope>SUBCELLULAR LOCATION [LARGE SCALE ANALYSIS]</scope>
</reference>
<reference evidence="7" key="3">
    <citation type="journal article" date="2007" name="Nucleic Acids Res.">
        <title>Proteomic analysis of the U1 snRNP of Schizosaccharomyces pombe reveals three essential organism-specific proteins.</title>
        <authorList>
            <person name="Newo A.N.S."/>
            <person name="Luetzelberger M."/>
            <person name="Bottner C.A."/>
            <person name="Wehland J."/>
            <person name="Wissing J."/>
            <person name="Jaensch L."/>
            <person name="Kaeufer N.F."/>
        </authorList>
    </citation>
    <scope>IDENTIFICATION IN U1 SNRNP BY MASS SPECTROMETRY</scope>
</reference>
<dbReference type="EMBL" id="CU329671">
    <property type="protein sequence ID" value="CAA19287.1"/>
    <property type="molecule type" value="Genomic_DNA"/>
</dbReference>
<dbReference type="PIR" id="T40479">
    <property type="entry name" value="T40479"/>
</dbReference>
<dbReference type="RefSeq" id="NP_596424.1">
    <property type="nucleotide sequence ID" value="NM_001022343.2"/>
</dbReference>
<dbReference type="SMR" id="O74968"/>
<dbReference type="BioGRID" id="277382">
    <property type="interactions" value="328"/>
</dbReference>
<dbReference type="FunCoup" id="O74968">
    <property type="interactions" value="733"/>
</dbReference>
<dbReference type="STRING" id="284812.O74968"/>
<dbReference type="iPTMnet" id="O74968"/>
<dbReference type="PaxDb" id="4896-SPBC4B4.07c.1"/>
<dbReference type="EnsemblFungi" id="SPBC4B4.07c.1">
    <property type="protein sequence ID" value="SPBC4B4.07c.1:pep"/>
    <property type="gene ID" value="SPBC4B4.07c"/>
</dbReference>
<dbReference type="GeneID" id="2540865"/>
<dbReference type="KEGG" id="spo:2540865"/>
<dbReference type="PomBase" id="SPBC4B4.07c">
    <property type="gene designation" value="usp102"/>
</dbReference>
<dbReference type="VEuPathDB" id="FungiDB:SPBC4B4.07c"/>
<dbReference type="eggNOG" id="KOG4206">
    <property type="taxonomic scope" value="Eukaryota"/>
</dbReference>
<dbReference type="HOGENOM" id="CLU_041869_0_1_1"/>
<dbReference type="InParanoid" id="O74968"/>
<dbReference type="OMA" id="VRMIPTK"/>
<dbReference type="PhylomeDB" id="O74968"/>
<dbReference type="Reactome" id="R-SPO-72163">
    <property type="pathway name" value="mRNA Splicing - Major Pathway"/>
</dbReference>
<dbReference type="PRO" id="PR:O74968"/>
<dbReference type="Proteomes" id="UP000002485">
    <property type="component" value="Chromosome II"/>
</dbReference>
<dbReference type="GO" id="GO:0005730">
    <property type="term" value="C:nucleolus"/>
    <property type="evidence" value="ECO:0007005"/>
    <property type="project" value="PomBase"/>
</dbReference>
<dbReference type="GO" id="GO:0005634">
    <property type="term" value="C:nucleus"/>
    <property type="evidence" value="ECO:0007005"/>
    <property type="project" value="PomBase"/>
</dbReference>
<dbReference type="GO" id="GO:0005685">
    <property type="term" value="C:U1 snRNP"/>
    <property type="evidence" value="ECO:0000314"/>
    <property type="project" value="PomBase"/>
</dbReference>
<dbReference type="GO" id="GO:0071004">
    <property type="term" value="C:U2-type prespliceosome"/>
    <property type="evidence" value="ECO:0000266"/>
    <property type="project" value="PomBase"/>
</dbReference>
<dbReference type="GO" id="GO:0030619">
    <property type="term" value="F:U1 snRNA binding"/>
    <property type="evidence" value="ECO:0000318"/>
    <property type="project" value="GO_Central"/>
</dbReference>
<dbReference type="GO" id="GO:0000395">
    <property type="term" value="P:mRNA 5'-splice site recognition"/>
    <property type="evidence" value="ECO:0000305"/>
    <property type="project" value="PomBase"/>
</dbReference>
<dbReference type="GO" id="GO:0000398">
    <property type="term" value="P:mRNA splicing, via spliceosome"/>
    <property type="evidence" value="ECO:0000318"/>
    <property type="project" value="GO_Central"/>
</dbReference>
<dbReference type="CDD" id="cd12246">
    <property type="entry name" value="RRM1_U1A_like"/>
    <property type="match status" value="1"/>
</dbReference>
<dbReference type="CDD" id="cd12247">
    <property type="entry name" value="RRM2_U1A_like"/>
    <property type="match status" value="1"/>
</dbReference>
<dbReference type="FunFam" id="3.30.70.330:FF:000039">
    <property type="entry name" value="U1 small nuclear ribonucleoprotein A"/>
    <property type="match status" value="1"/>
</dbReference>
<dbReference type="FunFam" id="3.30.70.330:FF:000029">
    <property type="entry name" value="U2 small nuclear ribonucleoprotein B"/>
    <property type="match status" value="1"/>
</dbReference>
<dbReference type="Gene3D" id="3.30.70.330">
    <property type="match status" value="2"/>
</dbReference>
<dbReference type="InterPro" id="IPR012677">
    <property type="entry name" value="Nucleotide-bd_a/b_plait_sf"/>
</dbReference>
<dbReference type="InterPro" id="IPR035979">
    <property type="entry name" value="RBD_domain_sf"/>
</dbReference>
<dbReference type="InterPro" id="IPR000504">
    <property type="entry name" value="RRM_dom"/>
</dbReference>
<dbReference type="PANTHER" id="PTHR23189">
    <property type="entry name" value="RNA RECOGNITION MOTIF-CONTAINING"/>
    <property type="match status" value="1"/>
</dbReference>
<dbReference type="Pfam" id="PF00076">
    <property type="entry name" value="RRM_1"/>
    <property type="match status" value="2"/>
</dbReference>
<dbReference type="SMART" id="SM00360">
    <property type="entry name" value="RRM"/>
    <property type="match status" value="2"/>
</dbReference>
<dbReference type="SUPFAM" id="SSF54928">
    <property type="entry name" value="RNA-binding domain, RBD"/>
    <property type="match status" value="1"/>
</dbReference>
<dbReference type="PROSITE" id="PS50102">
    <property type="entry name" value="RRM"/>
    <property type="match status" value="2"/>
</dbReference>
<sequence length="249" mass="28339">MDPQTNSHQEVQQPSPKETDSQTPSETLYIRNIEEKIRLTMLKRILEHLFGSYGKVIDVQARKTLRMRGQAFVVFDNLENASRALKDLQGYPLYGKPMMIQYSKSKSDIIVQRESPEEIETRKKDRKNRREMLKRTSALQPAAPKPTHKKPVPKRNVGAERKSTINEDLLPPNKVLLLQNIPQEVNADVLTQIFEAFSGFQEVRMVPGRRGIAFVEYDSDREATVAKNGTTGMSLSGNQIKVTFARKAS</sequence>
<evidence type="ECO:0000250" key="1">
    <source>
        <dbReference type="UniProtKB" id="P32605"/>
    </source>
</evidence>
<evidence type="ECO:0000255" key="2"/>
<evidence type="ECO:0000255" key="3">
    <source>
        <dbReference type="PROSITE-ProRule" id="PRU00176"/>
    </source>
</evidence>
<evidence type="ECO:0000256" key="4">
    <source>
        <dbReference type="SAM" id="MobiDB-lite"/>
    </source>
</evidence>
<evidence type="ECO:0000269" key="5">
    <source>
    </source>
</evidence>
<evidence type="ECO:0000269" key="6">
    <source>
    </source>
</evidence>
<evidence type="ECO:0000305" key="7"/>
<evidence type="ECO:0000312" key="8">
    <source>
        <dbReference type="EMBL" id="CAA19287.1"/>
    </source>
</evidence>
<organism>
    <name type="scientific">Schizosaccharomyces pombe (strain 972 / ATCC 24843)</name>
    <name type="common">Fission yeast</name>
    <dbReference type="NCBI Taxonomy" id="284812"/>
    <lineage>
        <taxon>Eukaryota</taxon>
        <taxon>Fungi</taxon>
        <taxon>Dikarya</taxon>
        <taxon>Ascomycota</taxon>
        <taxon>Taphrinomycotina</taxon>
        <taxon>Schizosaccharomycetes</taxon>
        <taxon>Schizosaccharomycetales</taxon>
        <taxon>Schizosaccharomycetaceae</taxon>
        <taxon>Schizosaccharomyces</taxon>
    </lineage>
</organism>
<feature type="chain" id="PRO_0000338448" description="U1 small nuclear ribonucleoprotein usp102">
    <location>
        <begin position="1"/>
        <end position="249"/>
    </location>
</feature>
<feature type="domain" description="RRM 1" evidence="3">
    <location>
        <begin position="26"/>
        <end position="105"/>
    </location>
</feature>
<feature type="domain" description="RRM 2" evidence="3">
    <location>
        <begin position="174"/>
        <end position="247"/>
    </location>
</feature>
<feature type="region of interest" description="Disordered" evidence="4">
    <location>
        <begin position="1"/>
        <end position="25"/>
    </location>
</feature>
<feature type="region of interest" description="Disordered" evidence="4">
    <location>
        <begin position="113"/>
        <end position="157"/>
    </location>
</feature>
<feature type="compositionally biased region" description="Basic and acidic residues" evidence="4">
    <location>
        <begin position="114"/>
        <end position="134"/>
    </location>
</feature>
<keyword id="KW-0507">mRNA processing</keyword>
<keyword id="KW-0508">mRNA splicing</keyword>
<keyword id="KW-0539">Nucleus</keyword>
<keyword id="KW-1185">Reference proteome</keyword>
<keyword id="KW-0677">Repeat</keyword>
<keyword id="KW-0687">Ribonucleoprotein</keyword>
<keyword id="KW-0694">RNA-binding</keyword>
<keyword id="KW-0747">Spliceosome</keyword>
<proteinExistence type="evidence at protein level"/>